<reference key="1">
    <citation type="journal article" date="2005" name="J. Bacteriol.">
        <title>Swine and poultry pathogens: the complete genome sequences of two strains of Mycoplasma hyopneumoniae and a strain of Mycoplasma synoviae.</title>
        <authorList>
            <person name="Vasconcelos A.T.R."/>
            <person name="Ferreira H.B."/>
            <person name="Bizarro C.V."/>
            <person name="Bonatto S.L."/>
            <person name="Carvalho M.O."/>
            <person name="Pinto P.M."/>
            <person name="Almeida D.F."/>
            <person name="Almeida L.G.P."/>
            <person name="Almeida R."/>
            <person name="Alves-Junior L."/>
            <person name="Assuncao E.N."/>
            <person name="Azevedo V.A.C."/>
            <person name="Bogo M.R."/>
            <person name="Brigido M.M."/>
            <person name="Brocchi M."/>
            <person name="Burity H.A."/>
            <person name="Camargo A.A."/>
            <person name="Camargo S.S."/>
            <person name="Carepo M.S."/>
            <person name="Carraro D.M."/>
            <person name="de Mattos Cascardo J.C."/>
            <person name="Castro L.A."/>
            <person name="Cavalcanti G."/>
            <person name="Chemale G."/>
            <person name="Collevatti R.G."/>
            <person name="Cunha C.W."/>
            <person name="Dallagiovanna B."/>
            <person name="Dambros B.P."/>
            <person name="Dellagostin O.A."/>
            <person name="Falcao C."/>
            <person name="Fantinatti-Garboggini F."/>
            <person name="Felipe M.S.S."/>
            <person name="Fiorentin L."/>
            <person name="Franco G.R."/>
            <person name="Freitas N.S.A."/>
            <person name="Frias D."/>
            <person name="Grangeiro T.B."/>
            <person name="Grisard E.C."/>
            <person name="Guimaraes C.T."/>
            <person name="Hungria M."/>
            <person name="Jardim S.N."/>
            <person name="Krieger M.A."/>
            <person name="Laurino J.P."/>
            <person name="Lima L.F.A."/>
            <person name="Lopes M.I."/>
            <person name="Loreto E.L.S."/>
            <person name="Madeira H.M.F."/>
            <person name="Manfio G.P."/>
            <person name="Maranhao A.Q."/>
            <person name="Martinkovics C.T."/>
            <person name="Medeiros S.R.B."/>
            <person name="Moreira M.A.M."/>
            <person name="Neiva M."/>
            <person name="Ramalho-Neto C.E."/>
            <person name="Nicolas M.F."/>
            <person name="Oliveira S.C."/>
            <person name="Paixao R.F.C."/>
            <person name="Pedrosa F.O."/>
            <person name="Pena S.D.J."/>
            <person name="Pereira M."/>
            <person name="Pereira-Ferrari L."/>
            <person name="Piffer I."/>
            <person name="Pinto L.S."/>
            <person name="Potrich D.P."/>
            <person name="Salim A.C.M."/>
            <person name="Santos F.R."/>
            <person name="Schmitt R."/>
            <person name="Schneider M.P.C."/>
            <person name="Schrank A."/>
            <person name="Schrank I.S."/>
            <person name="Schuck A.F."/>
            <person name="Seuanez H.N."/>
            <person name="Silva D.W."/>
            <person name="Silva R."/>
            <person name="Silva S.C."/>
            <person name="Soares C.M.A."/>
            <person name="Souza K.R.L."/>
            <person name="Souza R.C."/>
            <person name="Staats C.C."/>
            <person name="Steffens M.B.R."/>
            <person name="Teixeira S.M.R."/>
            <person name="Urmenyi T.P."/>
            <person name="Vainstein M.H."/>
            <person name="Zuccherato L.W."/>
            <person name="Simpson A.J.G."/>
            <person name="Zaha A."/>
        </authorList>
    </citation>
    <scope>NUCLEOTIDE SEQUENCE [LARGE SCALE GENOMIC DNA]</scope>
    <source>
        <strain>7448</strain>
    </source>
</reference>
<protein>
    <recommendedName>
        <fullName evidence="1">Large ribosomal subunit protein bL32</fullName>
    </recommendedName>
    <alternativeName>
        <fullName evidence="3">50S ribosomal protein L32</fullName>
    </alternativeName>
</protein>
<organism>
    <name type="scientific">Mesomycoplasma hyopneumoniae (strain 7448)</name>
    <name type="common">Mycoplasma hyopneumoniae</name>
    <dbReference type="NCBI Taxonomy" id="262722"/>
    <lineage>
        <taxon>Bacteria</taxon>
        <taxon>Bacillati</taxon>
        <taxon>Mycoplasmatota</taxon>
        <taxon>Mycoplasmoidales</taxon>
        <taxon>Metamycoplasmataceae</taxon>
        <taxon>Mesomycoplasma</taxon>
    </lineage>
</organism>
<feature type="chain" id="PRO_0000225739" description="Large ribosomal subunit protein bL32">
    <location>
        <begin position="1"/>
        <end position="65"/>
    </location>
</feature>
<feature type="region of interest" description="Disordered" evidence="2">
    <location>
        <begin position="1"/>
        <end position="21"/>
    </location>
</feature>
<feature type="compositionally biased region" description="Basic residues" evidence="2">
    <location>
        <begin position="1"/>
        <end position="19"/>
    </location>
</feature>
<dbReference type="EMBL" id="AE017244">
    <property type="protein sequence ID" value="AAZ53649.1"/>
    <property type="molecule type" value="Genomic_DNA"/>
</dbReference>
<dbReference type="RefSeq" id="WP_011284046.1">
    <property type="nucleotide sequence ID" value="NC_007332.1"/>
</dbReference>
<dbReference type="SMR" id="Q4A890"/>
<dbReference type="GeneID" id="41334573"/>
<dbReference type="KEGG" id="mhp:MHP7448_0275"/>
<dbReference type="HOGENOM" id="CLU_129084_1_3_14"/>
<dbReference type="Proteomes" id="UP000000553">
    <property type="component" value="Chromosome"/>
</dbReference>
<dbReference type="GO" id="GO:0015934">
    <property type="term" value="C:large ribosomal subunit"/>
    <property type="evidence" value="ECO:0007669"/>
    <property type="project" value="InterPro"/>
</dbReference>
<dbReference type="GO" id="GO:0003735">
    <property type="term" value="F:structural constituent of ribosome"/>
    <property type="evidence" value="ECO:0007669"/>
    <property type="project" value="InterPro"/>
</dbReference>
<dbReference type="GO" id="GO:0006412">
    <property type="term" value="P:translation"/>
    <property type="evidence" value="ECO:0007669"/>
    <property type="project" value="UniProtKB-UniRule"/>
</dbReference>
<dbReference type="Gene3D" id="1.20.5.640">
    <property type="entry name" value="Single helix bin"/>
    <property type="match status" value="1"/>
</dbReference>
<dbReference type="HAMAP" id="MF_00340">
    <property type="entry name" value="Ribosomal_bL32"/>
    <property type="match status" value="1"/>
</dbReference>
<dbReference type="InterPro" id="IPR002677">
    <property type="entry name" value="Ribosomal_bL32"/>
</dbReference>
<dbReference type="InterPro" id="IPR044957">
    <property type="entry name" value="Ribosomal_bL32_bact"/>
</dbReference>
<dbReference type="InterPro" id="IPR011332">
    <property type="entry name" value="Ribosomal_zn-bd"/>
</dbReference>
<dbReference type="NCBIfam" id="TIGR01031">
    <property type="entry name" value="rpmF_bact"/>
    <property type="match status" value="1"/>
</dbReference>
<dbReference type="PANTHER" id="PTHR35534">
    <property type="entry name" value="50S RIBOSOMAL PROTEIN L32"/>
    <property type="match status" value="1"/>
</dbReference>
<dbReference type="PANTHER" id="PTHR35534:SF1">
    <property type="entry name" value="LARGE RIBOSOMAL SUBUNIT PROTEIN BL32"/>
    <property type="match status" value="1"/>
</dbReference>
<dbReference type="Pfam" id="PF01783">
    <property type="entry name" value="Ribosomal_L32p"/>
    <property type="match status" value="1"/>
</dbReference>
<dbReference type="SUPFAM" id="SSF57829">
    <property type="entry name" value="Zn-binding ribosomal proteins"/>
    <property type="match status" value="1"/>
</dbReference>
<comment type="similarity">
    <text evidence="1">Belongs to the bacterial ribosomal protein bL32 family.</text>
</comment>
<sequence length="65" mass="7521">MAIVPKRKTSKQRKHKRQSHSALKLPNLVSCSNCANKKLPHHICQFCGFYKNRKIISFKAVNDKN</sequence>
<evidence type="ECO:0000255" key="1">
    <source>
        <dbReference type="HAMAP-Rule" id="MF_00340"/>
    </source>
</evidence>
<evidence type="ECO:0000256" key="2">
    <source>
        <dbReference type="SAM" id="MobiDB-lite"/>
    </source>
</evidence>
<evidence type="ECO:0000305" key="3"/>
<gene>
    <name evidence="1" type="primary">rpmF</name>
    <name type="ordered locus">MHP7448_0275</name>
</gene>
<name>RL32_MESH7</name>
<keyword id="KW-0687">Ribonucleoprotein</keyword>
<keyword id="KW-0689">Ribosomal protein</keyword>
<proteinExistence type="inferred from homology"/>
<accession>Q4A890</accession>